<accession>Q8FL39</accession>
<keyword id="KW-0068">Autocatalytic cleavage</keyword>
<keyword id="KW-0210">Decarboxylase</keyword>
<keyword id="KW-0456">Lyase</keyword>
<keyword id="KW-0620">Polyamine biosynthesis</keyword>
<keyword id="KW-0670">Pyruvate</keyword>
<keyword id="KW-1185">Reference proteome</keyword>
<keyword id="KW-0949">S-adenosyl-L-methionine</keyword>
<keyword id="KW-0704">Schiff base</keyword>
<keyword id="KW-0745">Spermidine biosynthesis</keyword>
<keyword id="KW-0865">Zymogen</keyword>
<reference key="1">
    <citation type="journal article" date="2002" name="Proc. Natl. Acad. Sci. U.S.A.">
        <title>Extensive mosaic structure revealed by the complete genome sequence of uropathogenic Escherichia coli.</title>
        <authorList>
            <person name="Welch R.A."/>
            <person name="Burland V."/>
            <person name="Plunkett G. III"/>
            <person name="Redford P."/>
            <person name="Roesch P."/>
            <person name="Rasko D."/>
            <person name="Buckles E.L."/>
            <person name="Liou S.-R."/>
            <person name="Boutin A."/>
            <person name="Hackett J."/>
            <person name="Stroud D."/>
            <person name="Mayhew G.F."/>
            <person name="Rose D.J."/>
            <person name="Zhou S."/>
            <person name="Schwartz D.C."/>
            <person name="Perna N.T."/>
            <person name="Mobley H.L.T."/>
            <person name="Donnenberg M.S."/>
            <person name="Blattner F.R."/>
        </authorList>
    </citation>
    <scope>NUCLEOTIDE SEQUENCE [LARGE SCALE GENOMIC DNA]</scope>
    <source>
        <strain>CFT073 / ATCC 700928 / UPEC</strain>
    </source>
</reference>
<sequence length="264" mass="30429">MKKLKLHGFNNLTKSLSFCIYDICYAKTTEERDGYIAYIDELYNANRLTEILSETCSIIGANILNIARQDYEPQGASVTILVSEEPVDPKLIDKTEHPGPLPETVVAHLDKSHICVHTYPESHPEGGLCTFRADIEVSTCGVISPLKALNYLIHQLESDIVTIDYRVRGFTRDINGMKHFIDHEINSIQNFMSEDMKALYDMVDVNVYQENIFHTKMLLKEFDLKHYMFHTKPEDLTDSERQEITAALWKEMREIYYGRNMPAV</sequence>
<dbReference type="EC" id="4.1.1.50" evidence="1"/>
<dbReference type="EMBL" id="AE014075">
    <property type="protein sequence ID" value="AAN78643.1"/>
    <property type="molecule type" value="Genomic_DNA"/>
</dbReference>
<dbReference type="RefSeq" id="WP_000734302.1">
    <property type="nucleotide sequence ID" value="NZ_CP051263.1"/>
</dbReference>
<dbReference type="STRING" id="199310.c0149"/>
<dbReference type="KEGG" id="ecc:c0149"/>
<dbReference type="eggNOG" id="COG1586">
    <property type="taxonomic scope" value="Bacteria"/>
</dbReference>
<dbReference type="HOGENOM" id="CLU_092007_0_0_6"/>
<dbReference type="BioCyc" id="ECOL199310:C0149-MONOMER"/>
<dbReference type="UniPathway" id="UPA00331">
    <property type="reaction ID" value="UER00451"/>
</dbReference>
<dbReference type="Proteomes" id="UP000001410">
    <property type="component" value="Chromosome"/>
</dbReference>
<dbReference type="GO" id="GO:0005829">
    <property type="term" value="C:cytosol"/>
    <property type="evidence" value="ECO:0007669"/>
    <property type="project" value="TreeGrafter"/>
</dbReference>
<dbReference type="GO" id="GO:0004014">
    <property type="term" value="F:adenosylmethionine decarboxylase activity"/>
    <property type="evidence" value="ECO:0007669"/>
    <property type="project" value="UniProtKB-UniRule"/>
</dbReference>
<dbReference type="GO" id="GO:0008295">
    <property type="term" value="P:spermidine biosynthetic process"/>
    <property type="evidence" value="ECO:0007669"/>
    <property type="project" value="UniProtKB-UniRule"/>
</dbReference>
<dbReference type="FunFam" id="3.60.90.10:FF:000001">
    <property type="entry name" value="S-adenosylmethionine decarboxylase proenzyme"/>
    <property type="match status" value="1"/>
</dbReference>
<dbReference type="Gene3D" id="3.60.90.10">
    <property type="entry name" value="S-adenosylmethionine decarboxylase"/>
    <property type="match status" value="1"/>
</dbReference>
<dbReference type="HAMAP" id="MF_00465">
    <property type="entry name" value="AdoMetDC_2"/>
    <property type="match status" value="1"/>
</dbReference>
<dbReference type="InterPro" id="IPR003826">
    <property type="entry name" value="AdoMetDC_fam_prok"/>
</dbReference>
<dbReference type="InterPro" id="IPR009165">
    <property type="entry name" value="S-AdoMet_deCO2ase_bac"/>
</dbReference>
<dbReference type="InterPro" id="IPR016067">
    <property type="entry name" value="S-AdoMet_deCO2ase_core"/>
</dbReference>
<dbReference type="NCBIfam" id="TIGR03331">
    <property type="entry name" value="SAM_DCase_Eco"/>
    <property type="match status" value="1"/>
</dbReference>
<dbReference type="PANTHER" id="PTHR33866">
    <property type="entry name" value="S-ADENOSYLMETHIONINE DECARBOXYLASE PROENZYME"/>
    <property type="match status" value="1"/>
</dbReference>
<dbReference type="PANTHER" id="PTHR33866:SF1">
    <property type="entry name" value="S-ADENOSYLMETHIONINE DECARBOXYLASE PROENZYME"/>
    <property type="match status" value="1"/>
</dbReference>
<dbReference type="Pfam" id="PF02675">
    <property type="entry name" value="AdoMet_dc"/>
    <property type="match status" value="1"/>
</dbReference>
<dbReference type="PIRSF" id="PIRSF001356">
    <property type="entry name" value="SAM_decarboxylas"/>
    <property type="match status" value="1"/>
</dbReference>
<dbReference type="SUPFAM" id="SSF56276">
    <property type="entry name" value="S-adenosylmethionine decarboxylase"/>
    <property type="match status" value="1"/>
</dbReference>
<comment type="function">
    <text evidence="1">Catalyzes the decarboxylation of S-adenosylmethionine to S-adenosylmethioninamine (dcAdoMet), the propylamine donor required for the synthesis of the polyamines spermine and spermidine from the diamine putrescine.</text>
</comment>
<comment type="catalytic activity">
    <reaction evidence="1">
        <text>S-adenosyl-L-methionine + H(+) = S-adenosyl 3-(methylsulfanyl)propylamine + CO2</text>
        <dbReference type="Rhea" id="RHEA:15981"/>
        <dbReference type="ChEBI" id="CHEBI:15378"/>
        <dbReference type="ChEBI" id="CHEBI:16526"/>
        <dbReference type="ChEBI" id="CHEBI:57443"/>
        <dbReference type="ChEBI" id="CHEBI:59789"/>
        <dbReference type="EC" id="4.1.1.50"/>
    </reaction>
</comment>
<comment type="cofactor">
    <cofactor evidence="1">
        <name>pyruvate</name>
        <dbReference type="ChEBI" id="CHEBI:15361"/>
    </cofactor>
    <text evidence="1">Binds 1 pyruvoyl group covalently per subunit.</text>
</comment>
<comment type="pathway">
    <text evidence="1">Amine and polyamine biosynthesis; S-adenosylmethioninamine biosynthesis; S-adenosylmethioninamine from S-adenosyl-L-methionine: step 1/1.</text>
</comment>
<comment type="subunit">
    <text evidence="1">Heterooctamer of four alpha and four beta chains arranged as a tetramer of alpha/beta heterodimers.</text>
</comment>
<comment type="PTM">
    <text evidence="1">Is synthesized initially as an inactive proenzyme. Formation of the active enzyme involves a self-maturation process in which the active site pyruvoyl group is generated from an internal serine residue via an autocatalytic post-translational modification. Two non-identical subunits are generated from the proenzyme in this reaction, and the pyruvate is formed at the N-terminus of the alpha chain, which is derived from the carboxyl end of the proenzyme. The post-translation cleavage follows an unusual pathway, termed non-hydrolytic serinolysis, in which the side chain hydroxyl group of the serine supplies its oxygen atom to form the C-terminus of the beta chain, while the remainder of the serine residue undergoes an oxidative deamination to produce ammonia and the pyruvoyl group blocking the N-terminus of the alpha chain.</text>
</comment>
<comment type="similarity">
    <text evidence="1">Belongs to the prokaryotic AdoMetDC family. Type 2 subfamily.</text>
</comment>
<gene>
    <name evidence="1" type="primary">speD</name>
    <name type="ordered locus">c0149</name>
</gene>
<proteinExistence type="inferred from homology"/>
<feature type="chain" id="PRO_0000030047" description="S-adenosylmethionine decarboxylase beta chain" evidence="1">
    <location>
        <begin position="1"/>
        <end position="111"/>
    </location>
</feature>
<feature type="chain" id="PRO_0000030048" description="S-adenosylmethionine decarboxylase alpha chain" evidence="1">
    <location>
        <begin position="112"/>
        <end position="264"/>
    </location>
</feature>
<feature type="active site" description="Schiff-base intermediate with substrate; via pyruvic acid" evidence="1">
    <location>
        <position position="112"/>
    </location>
</feature>
<feature type="active site" description="Proton acceptor; for processing activity" evidence="1">
    <location>
        <position position="117"/>
    </location>
</feature>
<feature type="active site" description="Proton donor; for catalytic activity" evidence="1">
    <location>
        <position position="140"/>
    </location>
</feature>
<feature type="site" description="Cleavage (non-hydrolytic); by autolysis" evidence="1">
    <location>
        <begin position="111"/>
        <end position="112"/>
    </location>
</feature>
<feature type="modified residue" description="Pyruvic acid (Ser); by autocatalysis" evidence="1">
    <location>
        <position position="112"/>
    </location>
</feature>
<evidence type="ECO:0000255" key="1">
    <source>
        <dbReference type="HAMAP-Rule" id="MF_00465"/>
    </source>
</evidence>
<protein>
    <recommendedName>
        <fullName evidence="1">S-adenosylmethionine decarboxylase proenzyme</fullName>
        <shortName evidence="1">AdoMetDC</shortName>
        <shortName evidence="1">SAMDC</shortName>
        <ecNumber evidence="1">4.1.1.50</ecNumber>
    </recommendedName>
    <component>
        <recommendedName>
            <fullName evidence="1">S-adenosylmethionine decarboxylase beta chain</fullName>
        </recommendedName>
    </component>
    <component>
        <recommendedName>
            <fullName evidence="1">S-adenosylmethionine decarboxylase alpha chain</fullName>
        </recommendedName>
    </component>
</protein>
<organism>
    <name type="scientific">Escherichia coli O6:H1 (strain CFT073 / ATCC 700928 / UPEC)</name>
    <dbReference type="NCBI Taxonomy" id="199310"/>
    <lineage>
        <taxon>Bacteria</taxon>
        <taxon>Pseudomonadati</taxon>
        <taxon>Pseudomonadota</taxon>
        <taxon>Gammaproteobacteria</taxon>
        <taxon>Enterobacterales</taxon>
        <taxon>Enterobacteriaceae</taxon>
        <taxon>Escherichia</taxon>
    </lineage>
</organism>
<name>SPED_ECOL6</name>